<reference key="1">
    <citation type="journal article" date="2007" name="Genome Res.">
        <title>Reductive evolution and niche adaptation inferred from the genome of Mycobacterium ulcerans, the causative agent of Buruli ulcer.</title>
        <authorList>
            <person name="Stinear T.P."/>
            <person name="Seemann T."/>
            <person name="Pidot S."/>
            <person name="Frigui W."/>
            <person name="Reysset G."/>
            <person name="Garnier T."/>
            <person name="Meurice G."/>
            <person name="Simon D."/>
            <person name="Bouchier C."/>
            <person name="Ma L."/>
            <person name="Tichit M."/>
            <person name="Porter J.L."/>
            <person name="Ryan J."/>
            <person name="Johnson P.D.R."/>
            <person name="Davies J.K."/>
            <person name="Jenkin G.A."/>
            <person name="Small P.L.C."/>
            <person name="Jones L.M."/>
            <person name="Tekaia F."/>
            <person name="Laval F."/>
            <person name="Daffe M."/>
            <person name="Parkhill J."/>
            <person name="Cole S.T."/>
        </authorList>
    </citation>
    <scope>NUCLEOTIDE SEQUENCE [LARGE SCALE GENOMIC DNA]</scope>
    <source>
        <strain>Agy99</strain>
    </source>
</reference>
<sequence length="455" mass="49355">MNSPATLAAKLPWSEWLPQQRWYAGRNRELAAAEPGAVVALRDDLDLVLVDVSYTDGSAERYQVLVRWDAGPVSEFSTLATIGSADDHTGFDALYDPVAPQVLLSLIDSSAVRSSSDGQVSFAREPDVELPLDAYPRVSDAEQSNTSVIFDRGQAAILKVFRRVSSGINPDIELNRVLGRAHNPHVARLLGTYEIGIPGEPPEAACPLGMATAYAANAAEGWAMATASVRDLFAEGDLYAHEVGGDFAGESRRLGEAVASVHATLAEQLGTAQATFPVDHVLARLSSTAAAVPELQQYAGTIEERFVKLVDETISVQRVHGDLHLGQVLRTPESWVLIDFEGESGQPLRERRAPDSPLRDVAGVLRSFEYAAYGPLVDHADDKQLAARAREWITRNRTAFCEGYAAASGNDPRDSELLLAAYELDKAVYEAGYESRHRPGWLPIPLRSIARLTAT</sequence>
<evidence type="ECO:0000250" key="1"/>
<evidence type="ECO:0000305" key="2"/>
<proteinExistence type="inferred from homology"/>
<organism>
    <name type="scientific">Mycobacterium ulcerans (strain Agy99)</name>
    <dbReference type="NCBI Taxonomy" id="362242"/>
    <lineage>
        <taxon>Bacteria</taxon>
        <taxon>Bacillati</taxon>
        <taxon>Actinomycetota</taxon>
        <taxon>Actinomycetes</taxon>
        <taxon>Mycobacteriales</taxon>
        <taxon>Mycobacteriaceae</taxon>
        <taxon>Mycobacterium</taxon>
        <taxon>Mycobacterium ulcerans group</taxon>
    </lineage>
</organism>
<gene>
    <name type="primary">mak</name>
    <name type="ordered locus">MUL_4796</name>
</gene>
<dbReference type="EC" id="2.7.1.175"/>
<dbReference type="EMBL" id="CP000325">
    <property type="protein sequence ID" value="ABL06708.1"/>
    <property type="molecule type" value="Genomic_DNA"/>
</dbReference>
<dbReference type="RefSeq" id="WP_011742300.1">
    <property type="nucleotide sequence ID" value="NC_008611.1"/>
</dbReference>
<dbReference type="SMR" id="A0PWI9"/>
<dbReference type="KEGG" id="mul:MUL_4796"/>
<dbReference type="eggNOG" id="COG3281">
    <property type="taxonomic scope" value="Bacteria"/>
</dbReference>
<dbReference type="HOGENOM" id="CLU_029675_0_0_11"/>
<dbReference type="UniPathway" id="UPA00164"/>
<dbReference type="Proteomes" id="UP000000765">
    <property type="component" value="Chromosome"/>
</dbReference>
<dbReference type="GO" id="GO:0005524">
    <property type="term" value="F:ATP binding"/>
    <property type="evidence" value="ECO:0007669"/>
    <property type="project" value="UniProtKB-KW"/>
</dbReference>
<dbReference type="GO" id="GO:0016301">
    <property type="term" value="F:kinase activity"/>
    <property type="evidence" value="ECO:0007669"/>
    <property type="project" value="UniProtKB-KW"/>
</dbReference>
<dbReference type="GO" id="GO:0046835">
    <property type="term" value="P:carbohydrate phosphorylation"/>
    <property type="evidence" value="ECO:0000250"/>
    <property type="project" value="UniProtKB"/>
</dbReference>
<dbReference type="GO" id="GO:0005978">
    <property type="term" value="P:glycogen biosynthetic process"/>
    <property type="evidence" value="ECO:0007669"/>
    <property type="project" value="UniProtKB-UniPathway"/>
</dbReference>
<dbReference type="GO" id="GO:0005992">
    <property type="term" value="P:trehalose biosynthetic process"/>
    <property type="evidence" value="ECO:0000250"/>
    <property type="project" value="UniProtKB"/>
</dbReference>
<dbReference type="FunFam" id="3.90.1200.10:FF:000010">
    <property type="entry name" value="Maltokinase"/>
    <property type="match status" value="1"/>
</dbReference>
<dbReference type="Gene3D" id="3.90.1200.10">
    <property type="match status" value="1"/>
</dbReference>
<dbReference type="InterPro" id="IPR011009">
    <property type="entry name" value="Kinase-like_dom_sf"/>
</dbReference>
<dbReference type="InterPro" id="IPR040999">
    <property type="entry name" value="Mak_N_cap"/>
</dbReference>
<dbReference type="Pfam" id="PF18085">
    <property type="entry name" value="Mak_N_cap"/>
    <property type="match status" value="1"/>
</dbReference>
<dbReference type="SUPFAM" id="SSF56112">
    <property type="entry name" value="Protein kinase-like (PK-like)"/>
    <property type="match status" value="1"/>
</dbReference>
<accession>A0PWI9</accession>
<name>MAK_MYCUA</name>
<comment type="function">
    <text evidence="1">Catalyzes the ATP-dependent phosphorylation of maltose to maltose 1-phosphate. Is involved in a branched alpha-glucan biosynthetic pathway from trehalose, together with TreS, GlgE and GlgB (By similarity).</text>
</comment>
<comment type="catalytic activity">
    <reaction>
        <text>D-maltose + ATP = alpha-maltose 1-phosphate + ADP + H(+)</text>
        <dbReference type="Rhea" id="RHEA:31915"/>
        <dbReference type="ChEBI" id="CHEBI:15378"/>
        <dbReference type="ChEBI" id="CHEBI:17306"/>
        <dbReference type="ChEBI" id="CHEBI:30616"/>
        <dbReference type="ChEBI" id="CHEBI:63576"/>
        <dbReference type="ChEBI" id="CHEBI:456216"/>
        <dbReference type="EC" id="2.7.1.175"/>
    </reaction>
</comment>
<comment type="pathway">
    <text>Glycan biosynthesis; glycogen biosynthesis.</text>
</comment>
<comment type="subunit">
    <text evidence="1">Monomer.</text>
</comment>
<comment type="similarity">
    <text evidence="2">Belongs to the aminoglycoside phosphotransferase family.</text>
</comment>
<keyword id="KW-0067">ATP-binding</keyword>
<keyword id="KW-0119">Carbohydrate metabolism</keyword>
<keyword id="KW-0320">Glycogen biosynthesis</keyword>
<keyword id="KW-0321">Glycogen metabolism</keyword>
<keyword id="KW-0418">Kinase</keyword>
<keyword id="KW-0547">Nucleotide-binding</keyword>
<keyword id="KW-0808">Transferase</keyword>
<protein>
    <recommendedName>
        <fullName>Maltokinase</fullName>
        <shortName>MaK</shortName>
        <ecNumber>2.7.1.175</ecNumber>
    </recommendedName>
    <alternativeName>
        <fullName>Maltose-1-phosphate synthase</fullName>
    </alternativeName>
</protein>
<feature type="chain" id="PRO_0000412899" description="Maltokinase">
    <location>
        <begin position="1"/>
        <end position="455"/>
    </location>
</feature>